<organism>
    <name type="scientific">Escherichia coli O17:K52:H18 (strain UMN026 / ExPEC)</name>
    <dbReference type="NCBI Taxonomy" id="585056"/>
    <lineage>
        <taxon>Bacteria</taxon>
        <taxon>Pseudomonadati</taxon>
        <taxon>Pseudomonadota</taxon>
        <taxon>Gammaproteobacteria</taxon>
        <taxon>Enterobacterales</taxon>
        <taxon>Enterobacteriaceae</taxon>
        <taxon>Escherichia</taxon>
    </lineage>
</organism>
<protein>
    <recommendedName>
        <fullName evidence="1">Outer-membrane lipoprotein LolB</fullName>
    </recommendedName>
</protein>
<dbReference type="EMBL" id="CU928163">
    <property type="protein sequence ID" value="CAR12713.1"/>
    <property type="molecule type" value="Genomic_DNA"/>
</dbReference>
<dbReference type="RefSeq" id="WP_001130692.1">
    <property type="nucleotide sequence ID" value="NC_011751.1"/>
</dbReference>
<dbReference type="RefSeq" id="YP_002412250.1">
    <property type="nucleotide sequence ID" value="NC_011751.1"/>
</dbReference>
<dbReference type="SMR" id="B7N420"/>
<dbReference type="STRING" id="585056.ECUMN_1506"/>
<dbReference type="GeneID" id="93775274"/>
<dbReference type="KEGG" id="eum:ECUMN_1506"/>
<dbReference type="PATRIC" id="fig|585056.7.peg.1704"/>
<dbReference type="HOGENOM" id="CLU_092816_1_1_6"/>
<dbReference type="Proteomes" id="UP000007097">
    <property type="component" value="Chromosome"/>
</dbReference>
<dbReference type="GO" id="GO:0009279">
    <property type="term" value="C:cell outer membrane"/>
    <property type="evidence" value="ECO:0007669"/>
    <property type="project" value="UniProtKB-SubCell"/>
</dbReference>
<dbReference type="GO" id="GO:0044874">
    <property type="term" value="P:lipoprotein localization to outer membrane"/>
    <property type="evidence" value="ECO:0007669"/>
    <property type="project" value="UniProtKB-UniRule"/>
</dbReference>
<dbReference type="GO" id="GO:0015031">
    <property type="term" value="P:protein transport"/>
    <property type="evidence" value="ECO:0007669"/>
    <property type="project" value="UniProtKB-KW"/>
</dbReference>
<dbReference type="CDD" id="cd16326">
    <property type="entry name" value="LolB"/>
    <property type="match status" value="1"/>
</dbReference>
<dbReference type="FunFam" id="2.50.20.10:FF:000002">
    <property type="entry name" value="Outer-membrane lipoprotein LolB"/>
    <property type="match status" value="1"/>
</dbReference>
<dbReference type="Gene3D" id="2.50.20.10">
    <property type="entry name" value="Lipoprotein localisation LolA/LolB/LppX"/>
    <property type="match status" value="1"/>
</dbReference>
<dbReference type="HAMAP" id="MF_00233">
    <property type="entry name" value="LolB"/>
    <property type="match status" value="1"/>
</dbReference>
<dbReference type="InterPro" id="IPR029046">
    <property type="entry name" value="LolA/LolB/LppX"/>
</dbReference>
<dbReference type="InterPro" id="IPR004565">
    <property type="entry name" value="OM_lipoprot_LolB"/>
</dbReference>
<dbReference type="NCBIfam" id="TIGR00548">
    <property type="entry name" value="lolB"/>
    <property type="match status" value="1"/>
</dbReference>
<dbReference type="Pfam" id="PF03550">
    <property type="entry name" value="LolB"/>
    <property type="match status" value="1"/>
</dbReference>
<dbReference type="SUPFAM" id="SSF89392">
    <property type="entry name" value="Prokaryotic lipoproteins and lipoprotein localization factors"/>
    <property type="match status" value="1"/>
</dbReference>
<dbReference type="PROSITE" id="PS51257">
    <property type="entry name" value="PROKAR_LIPOPROTEIN"/>
    <property type="match status" value="1"/>
</dbReference>
<reference key="1">
    <citation type="journal article" date="2009" name="PLoS Genet.">
        <title>Organised genome dynamics in the Escherichia coli species results in highly diverse adaptive paths.</title>
        <authorList>
            <person name="Touchon M."/>
            <person name="Hoede C."/>
            <person name="Tenaillon O."/>
            <person name="Barbe V."/>
            <person name="Baeriswyl S."/>
            <person name="Bidet P."/>
            <person name="Bingen E."/>
            <person name="Bonacorsi S."/>
            <person name="Bouchier C."/>
            <person name="Bouvet O."/>
            <person name="Calteau A."/>
            <person name="Chiapello H."/>
            <person name="Clermont O."/>
            <person name="Cruveiller S."/>
            <person name="Danchin A."/>
            <person name="Diard M."/>
            <person name="Dossat C."/>
            <person name="Karoui M.E."/>
            <person name="Frapy E."/>
            <person name="Garry L."/>
            <person name="Ghigo J.M."/>
            <person name="Gilles A.M."/>
            <person name="Johnson J."/>
            <person name="Le Bouguenec C."/>
            <person name="Lescat M."/>
            <person name="Mangenot S."/>
            <person name="Martinez-Jehanne V."/>
            <person name="Matic I."/>
            <person name="Nassif X."/>
            <person name="Oztas S."/>
            <person name="Petit M.A."/>
            <person name="Pichon C."/>
            <person name="Rouy Z."/>
            <person name="Ruf C.S."/>
            <person name="Schneider D."/>
            <person name="Tourret J."/>
            <person name="Vacherie B."/>
            <person name="Vallenet D."/>
            <person name="Medigue C."/>
            <person name="Rocha E.P.C."/>
            <person name="Denamur E."/>
        </authorList>
    </citation>
    <scope>NUCLEOTIDE SEQUENCE [LARGE SCALE GENOMIC DNA]</scope>
    <source>
        <strain>UMN026 / ExPEC</strain>
    </source>
</reference>
<sequence>MPLPDFRLIRLLPLAALVLTACSVTTPKGPGKSPDSPQWRQHQQDVRNLNQYQTRGAFAYISDQQKVYARFFWQQTGQDRYRLLLTNPLGSTELELNAQPGNVQLVDNKGQRYTADDAEEMIGKLTGMPIPLNSLRQWILGLPGDATDYKLDDQYRLSEITYSQNGKNWKVVYGGYDTKTQPAMPANMELTDGGQRIKLKMDNWIVK</sequence>
<keyword id="KW-0998">Cell outer membrane</keyword>
<keyword id="KW-0143">Chaperone</keyword>
<keyword id="KW-0449">Lipoprotein</keyword>
<keyword id="KW-0472">Membrane</keyword>
<keyword id="KW-0564">Palmitate</keyword>
<keyword id="KW-0653">Protein transport</keyword>
<keyword id="KW-0732">Signal</keyword>
<keyword id="KW-0813">Transport</keyword>
<feature type="signal peptide" evidence="1">
    <location>
        <begin position="1"/>
        <end position="21"/>
    </location>
</feature>
<feature type="chain" id="PRO_1000190856" description="Outer-membrane lipoprotein LolB">
    <location>
        <begin position="22"/>
        <end position="207"/>
    </location>
</feature>
<feature type="lipid moiety-binding region" description="N-palmitoyl cysteine" evidence="1">
    <location>
        <position position="22"/>
    </location>
</feature>
<feature type="lipid moiety-binding region" description="S-diacylglycerol cysteine" evidence="1">
    <location>
        <position position="22"/>
    </location>
</feature>
<evidence type="ECO:0000255" key="1">
    <source>
        <dbReference type="HAMAP-Rule" id="MF_00233"/>
    </source>
</evidence>
<name>LOLB_ECOLU</name>
<gene>
    <name evidence="1" type="primary">lolB</name>
    <name type="ordered locus">ECUMN_1506</name>
</gene>
<proteinExistence type="inferred from homology"/>
<comment type="function">
    <text evidence="1">Plays a critical role in the incorporation of lipoproteins in the outer membrane after they are released by the LolA protein.</text>
</comment>
<comment type="subunit">
    <text evidence="1">Monomer.</text>
</comment>
<comment type="subcellular location">
    <subcellularLocation>
        <location evidence="1">Cell outer membrane</location>
        <topology evidence="1">Lipid-anchor</topology>
    </subcellularLocation>
</comment>
<comment type="similarity">
    <text evidence="1">Belongs to the LolB family.</text>
</comment>
<accession>B7N420</accession>